<comment type="function">
    <text evidence="1">Participates actively in the response to hyperosmotic and heat shock by preventing the aggregation of stress-denatured proteins, in association with DnaK and GrpE. It is the nucleotide exchange factor for DnaK and may function as a thermosensor. Unfolded proteins bind initially to DnaJ; upon interaction with the DnaJ-bound protein, DnaK hydrolyzes its bound ATP, resulting in the formation of a stable complex. GrpE releases ADP from DnaK; ATP binding to DnaK triggers the release of the substrate protein, thus completing the reaction cycle. Several rounds of ATP-dependent interactions between DnaJ, DnaK and GrpE are required for fully efficient folding.</text>
</comment>
<comment type="subunit">
    <text evidence="1">Homodimer.</text>
</comment>
<comment type="subcellular location">
    <subcellularLocation>
        <location evidence="1">Cytoplasm</location>
    </subcellularLocation>
</comment>
<comment type="similarity">
    <text evidence="1">Belongs to the GrpE family.</text>
</comment>
<dbReference type="EMBL" id="CP000239">
    <property type="protein sequence ID" value="ABC99171.1"/>
    <property type="molecule type" value="Genomic_DNA"/>
</dbReference>
<dbReference type="SMR" id="Q2JVR0"/>
<dbReference type="STRING" id="321327.CYA_0971"/>
<dbReference type="KEGG" id="cya:CYA_0971"/>
<dbReference type="eggNOG" id="COG0576">
    <property type="taxonomic scope" value="Bacteria"/>
</dbReference>
<dbReference type="HOGENOM" id="CLU_057217_5_1_3"/>
<dbReference type="OrthoDB" id="9812586at2"/>
<dbReference type="Proteomes" id="UP000008818">
    <property type="component" value="Chromosome"/>
</dbReference>
<dbReference type="GO" id="GO:0005737">
    <property type="term" value="C:cytoplasm"/>
    <property type="evidence" value="ECO:0007669"/>
    <property type="project" value="UniProtKB-SubCell"/>
</dbReference>
<dbReference type="GO" id="GO:0000774">
    <property type="term" value="F:adenyl-nucleotide exchange factor activity"/>
    <property type="evidence" value="ECO:0007669"/>
    <property type="project" value="InterPro"/>
</dbReference>
<dbReference type="GO" id="GO:0042803">
    <property type="term" value="F:protein homodimerization activity"/>
    <property type="evidence" value="ECO:0007669"/>
    <property type="project" value="InterPro"/>
</dbReference>
<dbReference type="GO" id="GO:0051087">
    <property type="term" value="F:protein-folding chaperone binding"/>
    <property type="evidence" value="ECO:0007669"/>
    <property type="project" value="InterPro"/>
</dbReference>
<dbReference type="GO" id="GO:0051082">
    <property type="term" value="F:unfolded protein binding"/>
    <property type="evidence" value="ECO:0007669"/>
    <property type="project" value="TreeGrafter"/>
</dbReference>
<dbReference type="GO" id="GO:0006457">
    <property type="term" value="P:protein folding"/>
    <property type="evidence" value="ECO:0007669"/>
    <property type="project" value="InterPro"/>
</dbReference>
<dbReference type="CDD" id="cd00446">
    <property type="entry name" value="GrpE"/>
    <property type="match status" value="1"/>
</dbReference>
<dbReference type="FunFam" id="2.30.22.10:FF:000001">
    <property type="entry name" value="Protein GrpE"/>
    <property type="match status" value="1"/>
</dbReference>
<dbReference type="Gene3D" id="3.90.20.20">
    <property type="match status" value="1"/>
</dbReference>
<dbReference type="Gene3D" id="2.30.22.10">
    <property type="entry name" value="Head domain of nucleotide exchange factor GrpE"/>
    <property type="match status" value="1"/>
</dbReference>
<dbReference type="HAMAP" id="MF_01151">
    <property type="entry name" value="GrpE"/>
    <property type="match status" value="1"/>
</dbReference>
<dbReference type="InterPro" id="IPR000740">
    <property type="entry name" value="GrpE"/>
</dbReference>
<dbReference type="InterPro" id="IPR013805">
    <property type="entry name" value="GrpE_coiled_coil"/>
</dbReference>
<dbReference type="InterPro" id="IPR009012">
    <property type="entry name" value="GrpE_head"/>
</dbReference>
<dbReference type="NCBIfam" id="NF010738">
    <property type="entry name" value="PRK14140.1"/>
    <property type="match status" value="1"/>
</dbReference>
<dbReference type="NCBIfam" id="NF010741">
    <property type="entry name" value="PRK14143.1"/>
    <property type="match status" value="1"/>
</dbReference>
<dbReference type="PANTHER" id="PTHR21237:SF40">
    <property type="entry name" value="CELL CYCLE AND APOPTOSIS REGULATOR PROTEIN 2"/>
    <property type="match status" value="1"/>
</dbReference>
<dbReference type="PANTHER" id="PTHR21237">
    <property type="entry name" value="GRPE PROTEIN"/>
    <property type="match status" value="1"/>
</dbReference>
<dbReference type="Pfam" id="PF01025">
    <property type="entry name" value="GrpE"/>
    <property type="match status" value="1"/>
</dbReference>
<dbReference type="PRINTS" id="PR00773">
    <property type="entry name" value="GRPEPROTEIN"/>
</dbReference>
<dbReference type="SUPFAM" id="SSF58014">
    <property type="entry name" value="Coiled-coil domain of nucleotide exchange factor GrpE"/>
    <property type="match status" value="1"/>
</dbReference>
<dbReference type="SUPFAM" id="SSF51064">
    <property type="entry name" value="Head domain of nucleotide exchange factor GrpE"/>
    <property type="match status" value="1"/>
</dbReference>
<dbReference type="PROSITE" id="PS01071">
    <property type="entry name" value="GRPE"/>
    <property type="match status" value="1"/>
</dbReference>
<proteinExistence type="inferred from homology"/>
<accession>Q2JVR0</accession>
<name>GRPE_SYNJA</name>
<protein>
    <recommendedName>
        <fullName evidence="1">Protein GrpE</fullName>
    </recommendedName>
    <alternativeName>
        <fullName evidence="1">HSP-70 cofactor</fullName>
    </alternativeName>
</protein>
<gene>
    <name evidence="1" type="primary">grpE</name>
    <name type="ordered locus">CYA_0971</name>
</gene>
<sequence length="237" mass="27112">MPTEDAYPELQEEEIDVEAELEKLILEDREAEASTSSGEASAEASQDLSETLKQLQQELEITRQQLKEKEESYIRLYADFENYRRRTQREKEEFSQKERQKFVLEILPVVDSFERAQQQLKLETDREREVHNSYQSVYRLLVECLKKMGVSRMKSVGQPFDPNLHEAIARQPSSEYPEDVVAVEYQPGYKLGDLVIRHAMVAVSSGSPTSEPSPSDPATPKPEPESTPASPQNPQHS</sequence>
<keyword id="KW-0143">Chaperone</keyword>
<keyword id="KW-0963">Cytoplasm</keyword>
<keyword id="KW-0346">Stress response</keyword>
<organism>
    <name type="scientific">Synechococcus sp. (strain JA-3-3Ab)</name>
    <name type="common">Cyanobacteria bacterium Yellowstone A-Prime</name>
    <dbReference type="NCBI Taxonomy" id="321327"/>
    <lineage>
        <taxon>Bacteria</taxon>
        <taxon>Bacillati</taxon>
        <taxon>Cyanobacteriota</taxon>
        <taxon>Cyanophyceae</taxon>
        <taxon>Synechococcales</taxon>
        <taxon>Synechococcaceae</taxon>
        <taxon>Synechococcus</taxon>
    </lineage>
</organism>
<evidence type="ECO:0000255" key="1">
    <source>
        <dbReference type="HAMAP-Rule" id="MF_01151"/>
    </source>
</evidence>
<evidence type="ECO:0000256" key="2">
    <source>
        <dbReference type="SAM" id="MobiDB-lite"/>
    </source>
</evidence>
<feature type="chain" id="PRO_1000073069" description="Protein GrpE">
    <location>
        <begin position="1"/>
        <end position="237"/>
    </location>
</feature>
<feature type="region of interest" description="Disordered" evidence="2">
    <location>
        <begin position="27"/>
        <end position="51"/>
    </location>
</feature>
<feature type="region of interest" description="Disordered" evidence="2">
    <location>
        <begin position="202"/>
        <end position="237"/>
    </location>
</feature>
<feature type="compositionally biased region" description="Low complexity" evidence="2">
    <location>
        <begin position="33"/>
        <end position="45"/>
    </location>
</feature>
<feature type="compositionally biased region" description="Low complexity" evidence="2">
    <location>
        <begin position="204"/>
        <end position="213"/>
    </location>
</feature>
<feature type="compositionally biased region" description="Polar residues" evidence="2">
    <location>
        <begin position="227"/>
        <end position="237"/>
    </location>
</feature>
<reference key="1">
    <citation type="journal article" date="2007" name="ISME J.">
        <title>Population level functional diversity in a microbial community revealed by comparative genomic and metagenomic analyses.</title>
        <authorList>
            <person name="Bhaya D."/>
            <person name="Grossman A.R."/>
            <person name="Steunou A.-S."/>
            <person name="Khuri N."/>
            <person name="Cohan F.M."/>
            <person name="Hamamura N."/>
            <person name="Melendrez M.C."/>
            <person name="Bateson M.M."/>
            <person name="Ward D.M."/>
            <person name="Heidelberg J.F."/>
        </authorList>
    </citation>
    <scope>NUCLEOTIDE SEQUENCE [LARGE SCALE GENOMIC DNA]</scope>
    <source>
        <strain>JA-3-3Ab</strain>
    </source>
</reference>